<feature type="chain" id="PRO_0000112498" description="[LysW]-L-2-aminoadipate/[LysW]-L-glutamate phosphate reductase">
    <location>
        <begin position="1"/>
        <end position="352"/>
    </location>
</feature>
<feature type="active site" evidence="1">
    <location>
        <position position="153"/>
    </location>
</feature>
<feature type="binding site" evidence="1">
    <location>
        <begin position="13"/>
        <end position="16"/>
    </location>
    <ligand>
        <name>NADP(+)</name>
        <dbReference type="ChEBI" id="CHEBI:58349"/>
    </ligand>
</feature>
<feature type="binding site" evidence="1">
    <location>
        <position position="319"/>
    </location>
    <ligand>
        <name>NADP(+)</name>
        <dbReference type="ChEBI" id="CHEBI:58349"/>
    </ligand>
</feature>
<dbReference type="EC" id="1.2.1.103" evidence="1"/>
<dbReference type="EC" id="1.2.1.106" evidence="1"/>
<dbReference type="EMBL" id="AE006641">
    <property type="protein sequence ID" value="AAK40501.1"/>
    <property type="molecule type" value="Genomic_DNA"/>
</dbReference>
<dbReference type="EMBL" id="BK000545">
    <property type="protein sequence ID" value="DAA00049.1"/>
    <property type="molecule type" value="Genomic_DNA"/>
</dbReference>
<dbReference type="PIR" id="F90155">
    <property type="entry name" value="F90155"/>
</dbReference>
<dbReference type="RefSeq" id="WP_009990380.1">
    <property type="nucleotide sequence ID" value="NC_002754.1"/>
</dbReference>
<dbReference type="SMR" id="Q980X1"/>
<dbReference type="FunCoup" id="Q980X1">
    <property type="interactions" value="92"/>
</dbReference>
<dbReference type="STRING" id="273057.SSO0155"/>
<dbReference type="PaxDb" id="273057-SSO0155"/>
<dbReference type="EnsemblBacteria" id="AAK40501">
    <property type="protein sequence ID" value="AAK40501"/>
    <property type="gene ID" value="SSO0155"/>
</dbReference>
<dbReference type="GeneID" id="44129117"/>
<dbReference type="KEGG" id="sso:SSO0155"/>
<dbReference type="PATRIC" id="fig|273057.12.peg.152"/>
<dbReference type="eggNOG" id="arCOG00495">
    <property type="taxonomic scope" value="Archaea"/>
</dbReference>
<dbReference type="HOGENOM" id="CLU_006384_0_1_2"/>
<dbReference type="InParanoid" id="Q980X1"/>
<dbReference type="PhylomeDB" id="Q980X1"/>
<dbReference type="UniPathway" id="UPA00033">
    <property type="reaction ID" value="UER00037"/>
</dbReference>
<dbReference type="UniPathway" id="UPA00068"/>
<dbReference type="Proteomes" id="UP000001974">
    <property type="component" value="Chromosome"/>
</dbReference>
<dbReference type="GO" id="GO:0005737">
    <property type="term" value="C:cytoplasm"/>
    <property type="evidence" value="ECO:0007669"/>
    <property type="project" value="UniProtKB-SubCell"/>
</dbReference>
<dbReference type="GO" id="GO:0043870">
    <property type="term" value="F:N-acetyl-gamma-aminoadipyl-phosphate reductase activity"/>
    <property type="evidence" value="ECO:0007669"/>
    <property type="project" value="RHEA"/>
</dbReference>
<dbReference type="GO" id="GO:0003942">
    <property type="term" value="F:N-acetyl-gamma-glutamyl-phosphate reductase activity"/>
    <property type="evidence" value="ECO:0007669"/>
    <property type="project" value="InterPro"/>
</dbReference>
<dbReference type="GO" id="GO:0051287">
    <property type="term" value="F:NAD binding"/>
    <property type="evidence" value="ECO:0007669"/>
    <property type="project" value="InterPro"/>
</dbReference>
<dbReference type="GO" id="GO:0070401">
    <property type="term" value="F:NADP+ binding"/>
    <property type="evidence" value="ECO:0007669"/>
    <property type="project" value="InterPro"/>
</dbReference>
<dbReference type="GO" id="GO:0042450">
    <property type="term" value="P:arginine biosynthetic process via ornithine"/>
    <property type="evidence" value="ECO:0007669"/>
    <property type="project" value="UniProtKB-UniRule"/>
</dbReference>
<dbReference type="GO" id="GO:0006526">
    <property type="term" value="P:L-arginine biosynthetic process"/>
    <property type="evidence" value="ECO:0007669"/>
    <property type="project" value="UniProtKB-UniPathway"/>
</dbReference>
<dbReference type="GO" id="GO:0019878">
    <property type="term" value="P:lysine biosynthetic process via aminoadipic acid"/>
    <property type="evidence" value="ECO:0007669"/>
    <property type="project" value="UniProtKB-UniRule"/>
</dbReference>
<dbReference type="CDD" id="cd23939">
    <property type="entry name" value="AGPR_1_C_LysY"/>
    <property type="match status" value="1"/>
</dbReference>
<dbReference type="CDD" id="cd17895">
    <property type="entry name" value="AGPR_1_N"/>
    <property type="match status" value="1"/>
</dbReference>
<dbReference type="Gene3D" id="3.30.360.10">
    <property type="entry name" value="Dihydrodipicolinate Reductase, domain 2"/>
    <property type="match status" value="1"/>
</dbReference>
<dbReference type="Gene3D" id="3.40.50.720">
    <property type="entry name" value="NAD(P)-binding Rossmann-like Domain"/>
    <property type="match status" value="1"/>
</dbReference>
<dbReference type="HAMAP" id="MF_00150">
    <property type="entry name" value="ArgC_type1"/>
    <property type="match status" value="1"/>
</dbReference>
<dbReference type="HAMAP" id="MF_02083">
    <property type="entry name" value="LysY"/>
    <property type="match status" value="1"/>
</dbReference>
<dbReference type="InterPro" id="IPR023013">
    <property type="entry name" value="AGPR_AS"/>
</dbReference>
<dbReference type="InterPro" id="IPR000706">
    <property type="entry name" value="AGPR_type-1"/>
</dbReference>
<dbReference type="InterPro" id="IPR037535">
    <property type="entry name" value="LysY"/>
</dbReference>
<dbReference type="InterPro" id="IPR036291">
    <property type="entry name" value="NAD(P)-bd_dom_sf"/>
</dbReference>
<dbReference type="InterPro" id="IPR050085">
    <property type="entry name" value="NAGSA_dehydrogenase"/>
</dbReference>
<dbReference type="InterPro" id="IPR000534">
    <property type="entry name" value="Semialdehyde_DH_NAD-bd"/>
</dbReference>
<dbReference type="NCBIfam" id="TIGR01850">
    <property type="entry name" value="argC"/>
    <property type="match status" value="1"/>
</dbReference>
<dbReference type="PANTHER" id="PTHR32338:SF11">
    <property type="entry name" value="[LYSW]-L-2-AMINOADIPATE_[LYSW]-L-GLUTAMATE PHOSPHATE REDUCTASE-RELATED"/>
    <property type="match status" value="1"/>
</dbReference>
<dbReference type="PANTHER" id="PTHR32338">
    <property type="entry name" value="N-ACETYL-GAMMA-GLUTAMYL-PHOSPHATE REDUCTASE, CHLOROPLASTIC-RELATED-RELATED"/>
    <property type="match status" value="1"/>
</dbReference>
<dbReference type="Pfam" id="PF01118">
    <property type="entry name" value="Semialdhyde_dh"/>
    <property type="match status" value="1"/>
</dbReference>
<dbReference type="Pfam" id="PF22698">
    <property type="entry name" value="Semialdhyde_dhC_1"/>
    <property type="match status" value="1"/>
</dbReference>
<dbReference type="SMART" id="SM00859">
    <property type="entry name" value="Semialdhyde_dh"/>
    <property type="match status" value="1"/>
</dbReference>
<dbReference type="SUPFAM" id="SSF55347">
    <property type="entry name" value="Glyceraldehyde-3-phosphate dehydrogenase-like, C-terminal domain"/>
    <property type="match status" value="1"/>
</dbReference>
<dbReference type="SUPFAM" id="SSF51735">
    <property type="entry name" value="NAD(P)-binding Rossmann-fold domains"/>
    <property type="match status" value="1"/>
</dbReference>
<dbReference type="PROSITE" id="PS01224">
    <property type="entry name" value="ARGC"/>
    <property type="match status" value="1"/>
</dbReference>
<accession>Q980X1</accession>
<accession>Q7SI96</accession>
<keyword id="KW-0028">Amino-acid biosynthesis</keyword>
<keyword id="KW-0055">Arginine biosynthesis</keyword>
<keyword id="KW-0963">Cytoplasm</keyword>
<keyword id="KW-0457">Lysine biosynthesis</keyword>
<keyword id="KW-0521">NADP</keyword>
<keyword id="KW-0560">Oxidoreductase</keyword>
<keyword id="KW-1185">Reference proteome</keyword>
<comment type="function">
    <text evidence="1">Involved in both the arginine and lysine biosynthetic pathways.</text>
</comment>
<comment type="catalytic activity">
    <reaction evidence="1">
        <text>[amino-group carrier protein]-C-terminal-N-(1-carboxy-5-oxopentan-1-yl)-L-glutamine + phosphate + NADP(+) = [amino-group carrier protein]-C-terminal-N-(1-carboxy-5-phosphooxy-5-oxopentan-1-yl)-L-glutamine + NADPH + H(+)</text>
        <dbReference type="Rhea" id="RHEA:41948"/>
        <dbReference type="Rhea" id="RHEA-COMP:9712"/>
        <dbReference type="Rhea" id="RHEA-COMP:9714"/>
        <dbReference type="ChEBI" id="CHEBI:15378"/>
        <dbReference type="ChEBI" id="CHEBI:43474"/>
        <dbReference type="ChEBI" id="CHEBI:57783"/>
        <dbReference type="ChEBI" id="CHEBI:58349"/>
        <dbReference type="ChEBI" id="CHEBI:78499"/>
        <dbReference type="ChEBI" id="CHEBI:78501"/>
        <dbReference type="EC" id="1.2.1.103"/>
    </reaction>
</comment>
<comment type="catalytic activity">
    <reaction evidence="1">
        <text>[amino-group carrier protein]-C-terminal-gamma-(L-glutamyl-5-semialdehyde)-L-glutamate + phosphate + NADP(+) = [amino-group carrier protein]-C-terminal-gamma-(5-phospho-L-glutamyl)-L-glutamate + NADPH + H(+)</text>
        <dbReference type="Rhea" id="RHEA:52668"/>
        <dbReference type="Rhea" id="RHEA-COMP:13313"/>
        <dbReference type="Rhea" id="RHEA-COMP:13327"/>
        <dbReference type="ChEBI" id="CHEBI:15378"/>
        <dbReference type="ChEBI" id="CHEBI:43474"/>
        <dbReference type="ChEBI" id="CHEBI:57783"/>
        <dbReference type="ChEBI" id="CHEBI:58349"/>
        <dbReference type="ChEBI" id="CHEBI:136717"/>
        <dbReference type="ChEBI" id="CHEBI:136761"/>
        <dbReference type="EC" id="1.2.1.106"/>
    </reaction>
</comment>
<comment type="pathway">
    <text evidence="1 3">Amino-acid biosynthesis; L-lysine biosynthesis via AAA pathway; L-lysine from L-alpha-aminoadipate (Thermus route): step 3/5.</text>
</comment>
<comment type="pathway">
    <text evidence="1">Amino-acid biosynthesis; L-arginine biosynthesis.</text>
</comment>
<comment type="subcellular location">
    <subcellularLocation>
        <location evidence="1">Cytoplasm</location>
    </subcellularLocation>
</comment>
<comment type="similarity">
    <text evidence="1">Belongs to the NAGSA dehydrogenase family. Type 1 subfamily. LysY sub-subfamily.</text>
</comment>
<gene>
    <name evidence="1 2" type="primary">lysY</name>
    <name type="synonym">argC</name>
    <name type="ordered locus">SSO0155</name>
</gene>
<sequence length="352" mass="38685">MKDKVRVAVVGGSGYTGGELLRILVTHPKTEISVITSREYAGKPVSLIHPNLRGLISLNFTNFSIDKISDKADAIFLALPHGVSLNYAPKLLDLGLTVVDLSADFRLKNPELYKIWYNYEHPYPDLLDKAVYGLPELHYEELKNAKLIASPGCNATATILALAPIVATKITDEKKFISDVKVGSSEGGAKPSEGSHHPERQNAIRPYEAEGHRHAAEAEQELSRIAKANISVSIVPHAVSSIRGALASAHTWLTNELEEIEIWKKIAEFYRGKRFIRIIRGNIHPYPDPKFVIGSNFADIGFAVEKRISRLTTFSAIDNLMKGAAGQAVQAFNISMGFNEDDGLKLVPLRPA</sequence>
<protein>
    <recommendedName>
        <fullName evidence="1">[LysW]-L-2-aminoadipate/[LysW]-L-glutamate phosphate reductase</fullName>
        <ecNumber evidence="1">1.2.1.103</ecNumber>
        <ecNumber evidence="1">1.2.1.106</ecNumber>
    </recommendedName>
</protein>
<evidence type="ECO:0000255" key="1">
    <source>
        <dbReference type="HAMAP-Rule" id="MF_02083"/>
    </source>
</evidence>
<evidence type="ECO:0000303" key="2">
    <source>
    </source>
</evidence>
<evidence type="ECO:0000305" key="3">
    <source>
    </source>
</evidence>
<name>LYSY_SACS2</name>
<reference key="1">
    <citation type="journal article" date="2001" name="Proc. Natl. Acad. Sci. U.S.A.">
        <title>The complete genome of the crenarchaeon Sulfolobus solfataricus P2.</title>
        <authorList>
            <person name="She Q."/>
            <person name="Singh R.K."/>
            <person name="Confalonieri F."/>
            <person name="Zivanovic Y."/>
            <person name="Allard G."/>
            <person name="Awayez M.J."/>
            <person name="Chan-Weiher C.C.-Y."/>
            <person name="Clausen I.G."/>
            <person name="Curtis B.A."/>
            <person name="De Moors A."/>
            <person name="Erauso G."/>
            <person name="Fletcher C."/>
            <person name="Gordon P.M.K."/>
            <person name="Heikamp-de Jong I."/>
            <person name="Jeffries A.C."/>
            <person name="Kozera C.J."/>
            <person name="Medina N."/>
            <person name="Peng X."/>
            <person name="Thi-Ngoc H.P."/>
            <person name="Redder P."/>
            <person name="Schenk M.E."/>
            <person name="Theriault C."/>
            <person name="Tolstrup N."/>
            <person name="Charlebois R.L."/>
            <person name="Doolittle W.F."/>
            <person name="Duguet M."/>
            <person name="Gaasterland T."/>
            <person name="Garrett R.A."/>
            <person name="Ragan M.A."/>
            <person name="Sensen C.W."/>
            <person name="Van der Oost J."/>
        </authorList>
    </citation>
    <scope>NUCLEOTIDE SEQUENCE [LARGE SCALE GENOMIC DNA]</scope>
    <source>
        <strain>ATCC 35092 / DSM 1617 / JCM 11322 / P2</strain>
    </source>
</reference>
<reference key="2">
    <citation type="journal article" date="2002" name="J. Biol. Chem.">
        <title>The Sulfolobus solfataricus Lrp-like protein LysM regulates lysine biosynthesis in response to lysine availability.</title>
        <authorList>
            <person name="Brinkman A.B."/>
            <person name="Bell S.D."/>
            <person name="Lebbink R.J."/>
            <person name="de Vos W.M."/>
            <person name="van der Oost J."/>
        </authorList>
    </citation>
    <scope>INVOLVEMENT IN LYSINE BIOSYNTHESIS</scope>
    <source>
        <strain>ATCC 35092 / DSM 1617 / JCM 11322 / P2</strain>
    </source>
</reference>
<organism>
    <name type="scientific">Saccharolobus solfataricus (strain ATCC 35092 / DSM 1617 / JCM 11322 / P2)</name>
    <name type="common">Sulfolobus solfataricus</name>
    <dbReference type="NCBI Taxonomy" id="273057"/>
    <lineage>
        <taxon>Archaea</taxon>
        <taxon>Thermoproteota</taxon>
        <taxon>Thermoprotei</taxon>
        <taxon>Sulfolobales</taxon>
        <taxon>Sulfolobaceae</taxon>
        <taxon>Saccharolobus</taxon>
    </lineage>
</organism>
<proteinExistence type="inferred from homology"/>